<feature type="chain" id="PRO_1000078989" description="Chorismate synthase">
    <location>
        <begin position="1"/>
        <end position="364"/>
    </location>
</feature>
<feature type="binding site" evidence="1">
    <location>
        <position position="48"/>
    </location>
    <ligand>
        <name>NADP(+)</name>
        <dbReference type="ChEBI" id="CHEBI:58349"/>
    </ligand>
</feature>
<feature type="binding site" evidence="1">
    <location>
        <position position="54"/>
    </location>
    <ligand>
        <name>NADP(+)</name>
        <dbReference type="ChEBI" id="CHEBI:58349"/>
    </ligand>
</feature>
<feature type="binding site" evidence="1">
    <location>
        <begin position="125"/>
        <end position="127"/>
    </location>
    <ligand>
        <name>FMN</name>
        <dbReference type="ChEBI" id="CHEBI:58210"/>
    </ligand>
</feature>
<feature type="binding site" evidence="1">
    <location>
        <position position="282"/>
    </location>
    <ligand>
        <name>FMN</name>
        <dbReference type="ChEBI" id="CHEBI:58210"/>
    </ligand>
</feature>
<feature type="binding site" evidence="1">
    <location>
        <begin position="297"/>
        <end position="301"/>
    </location>
    <ligand>
        <name>FMN</name>
        <dbReference type="ChEBI" id="CHEBI:58210"/>
    </ligand>
</feature>
<feature type="binding site" evidence="1">
    <location>
        <position position="323"/>
    </location>
    <ligand>
        <name>FMN</name>
        <dbReference type="ChEBI" id="CHEBI:58210"/>
    </ligand>
</feature>
<name>AROC_CHLAA</name>
<accession>A9WI34</accession>
<sequence length="364" mass="39706">MPGNTFGHVFRVTTWGESHGPAVGCTVDGCPAGLPLDVADIQRELDRRRVGQSRVSSQRREADEVQILSGVFEGRTTGTPITMLVYNTDAKSHHYENIKDRYRPGHADYTWDAKYGFRDWRGGGRSSARETIGRVAAGAVARRLLATFGITLVGYTLQLADLRAEVFDEAEIERNIMRCPDARVAALMVERVDQARRELDSLGGIVEVRARGVPPGLGEPVFDKLQADIGKAMFSIPAIKGVEIGEGFGVAMLRGSQNNDPFIRRDDGTIGTVSNHHGGILGGISTGEEIVVRLAAKPPASIAQPQQTVDRDGNPVTIEVHGRHDPTVLPRLVPVAEAMLALVLADHLLRQRLARVTWEDRSDD</sequence>
<protein>
    <recommendedName>
        <fullName evidence="1">Chorismate synthase</fullName>
        <shortName evidence="1">CS</shortName>
        <ecNumber evidence="1">4.2.3.5</ecNumber>
    </recommendedName>
    <alternativeName>
        <fullName evidence="1">5-enolpyruvylshikimate-3-phosphate phospholyase</fullName>
    </alternativeName>
</protein>
<dbReference type="EC" id="4.2.3.5" evidence="1"/>
<dbReference type="EMBL" id="CP000909">
    <property type="protein sequence ID" value="ABY35725.1"/>
    <property type="molecule type" value="Genomic_DNA"/>
</dbReference>
<dbReference type="RefSeq" id="WP_012258378.1">
    <property type="nucleotide sequence ID" value="NC_010175.1"/>
</dbReference>
<dbReference type="RefSeq" id="YP_001636114.1">
    <property type="nucleotide sequence ID" value="NC_010175.1"/>
</dbReference>
<dbReference type="SMR" id="A9WI34"/>
<dbReference type="FunCoup" id="A9WI34">
    <property type="interactions" value="446"/>
</dbReference>
<dbReference type="STRING" id="324602.Caur_2519"/>
<dbReference type="EnsemblBacteria" id="ABY35725">
    <property type="protein sequence ID" value="ABY35725"/>
    <property type="gene ID" value="Caur_2519"/>
</dbReference>
<dbReference type="KEGG" id="cau:Caur_2519"/>
<dbReference type="PATRIC" id="fig|324602.8.peg.2842"/>
<dbReference type="eggNOG" id="COG0082">
    <property type="taxonomic scope" value="Bacteria"/>
</dbReference>
<dbReference type="HOGENOM" id="CLU_034547_0_2_0"/>
<dbReference type="InParanoid" id="A9WI34"/>
<dbReference type="UniPathway" id="UPA00053">
    <property type="reaction ID" value="UER00090"/>
</dbReference>
<dbReference type="Proteomes" id="UP000002008">
    <property type="component" value="Chromosome"/>
</dbReference>
<dbReference type="GO" id="GO:0005829">
    <property type="term" value="C:cytosol"/>
    <property type="evidence" value="ECO:0000318"/>
    <property type="project" value="GO_Central"/>
</dbReference>
<dbReference type="GO" id="GO:0004107">
    <property type="term" value="F:chorismate synthase activity"/>
    <property type="evidence" value="ECO:0000318"/>
    <property type="project" value="GO_Central"/>
</dbReference>
<dbReference type="GO" id="GO:0010181">
    <property type="term" value="F:FMN binding"/>
    <property type="evidence" value="ECO:0000318"/>
    <property type="project" value="GO_Central"/>
</dbReference>
<dbReference type="GO" id="GO:0008652">
    <property type="term" value="P:amino acid biosynthetic process"/>
    <property type="evidence" value="ECO:0007669"/>
    <property type="project" value="UniProtKB-KW"/>
</dbReference>
<dbReference type="GO" id="GO:0009073">
    <property type="term" value="P:aromatic amino acid family biosynthetic process"/>
    <property type="evidence" value="ECO:0000318"/>
    <property type="project" value="GO_Central"/>
</dbReference>
<dbReference type="GO" id="GO:0009423">
    <property type="term" value="P:chorismate biosynthetic process"/>
    <property type="evidence" value="ECO:0000318"/>
    <property type="project" value="GO_Central"/>
</dbReference>
<dbReference type="CDD" id="cd07304">
    <property type="entry name" value="Chorismate_synthase"/>
    <property type="match status" value="1"/>
</dbReference>
<dbReference type="FunFam" id="3.60.150.10:FF:000003">
    <property type="entry name" value="Chorismate synthase"/>
    <property type="match status" value="1"/>
</dbReference>
<dbReference type="Gene3D" id="3.60.150.10">
    <property type="entry name" value="Chorismate synthase AroC"/>
    <property type="match status" value="1"/>
</dbReference>
<dbReference type="HAMAP" id="MF_00300">
    <property type="entry name" value="Chorismate_synth"/>
    <property type="match status" value="1"/>
</dbReference>
<dbReference type="InterPro" id="IPR000453">
    <property type="entry name" value="Chorismate_synth"/>
</dbReference>
<dbReference type="InterPro" id="IPR035904">
    <property type="entry name" value="Chorismate_synth_AroC_sf"/>
</dbReference>
<dbReference type="InterPro" id="IPR020541">
    <property type="entry name" value="Chorismate_synthase_CS"/>
</dbReference>
<dbReference type="NCBIfam" id="TIGR00033">
    <property type="entry name" value="aroC"/>
    <property type="match status" value="1"/>
</dbReference>
<dbReference type="NCBIfam" id="NF003793">
    <property type="entry name" value="PRK05382.1"/>
    <property type="match status" value="1"/>
</dbReference>
<dbReference type="PANTHER" id="PTHR21085">
    <property type="entry name" value="CHORISMATE SYNTHASE"/>
    <property type="match status" value="1"/>
</dbReference>
<dbReference type="PANTHER" id="PTHR21085:SF0">
    <property type="entry name" value="CHORISMATE SYNTHASE"/>
    <property type="match status" value="1"/>
</dbReference>
<dbReference type="Pfam" id="PF01264">
    <property type="entry name" value="Chorismate_synt"/>
    <property type="match status" value="1"/>
</dbReference>
<dbReference type="PIRSF" id="PIRSF001456">
    <property type="entry name" value="Chorismate_synth"/>
    <property type="match status" value="1"/>
</dbReference>
<dbReference type="SUPFAM" id="SSF103263">
    <property type="entry name" value="Chorismate synthase, AroC"/>
    <property type="match status" value="1"/>
</dbReference>
<dbReference type="PROSITE" id="PS00787">
    <property type="entry name" value="CHORISMATE_SYNTHASE_1"/>
    <property type="match status" value="1"/>
</dbReference>
<dbReference type="PROSITE" id="PS00788">
    <property type="entry name" value="CHORISMATE_SYNTHASE_2"/>
    <property type="match status" value="1"/>
</dbReference>
<comment type="function">
    <text evidence="1">Catalyzes the anti-1,4-elimination of the C-3 phosphate and the C-6 proR hydrogen from 5-enolpyruvylshikimate-3-phosphate (EPSP) to yield chorismate, which is the branch point compound that serves as the starting substrate for the three terminal pathways of aromatic amino acid biosynthesis. This reaction introduces a second double bond into the aromatic ring system.</text>
</comment>
<comment type="catalytic activity">
    <reaction evidence="1">
        <text>5-O-(1-carboxyvinyl)-3-phosphoshikimate = chorismate + phosphate</text>
        <dbReference type="Rhea" id="RHEA:21020"/>
        <dbReference type="ChEBI" id="CHEBI:29748"/>
        <dbReference type="ChEBI" id="CHEBI:43474"/>
        <dbReference type="ChEBI" id="CHEBI:57701"/>
        <dbReference type="EC" id="4.2.3.5"/>
    </reaction>
</comment>
<comment type="cofactor">
    <cofactor evidence="1">
        <name>FMNH2</name>
        <dbReference type="ChEBI" id="CHEBI:57618"/>
    </cofactor>
    <text evidence="1">Reduced FMN (FMNH(2)).</text>
</comment>
<comment type="pathway">
    <text evidence="1">Metabolic intermediate biosynthesis; chorismate biosynthesis; chorismate from D-erythrose 4-phosphate and phosphoenolpyruvate: step 7/7.</text>
</comment>
<comment type="subunit">
    <text evidence="1">Homotetramer.</text>
</comment>
<comment type="similarity">
    <text evidence="1">Belongs to the chorismate synthase family.</text>
</comment>
<gene>
    <name evidence="1" type="primary">aroC</name>
    <name type="ordered locus">Caur_2519</name>
</gene>
<organism>
    <name type="scientific">Chloroflexus aurantiacus (strain ATCC 29366 / DSM 635 / J-10-fl)</name>
    <dbReference type="NCBI Taxonomy" id="324602"/>
    <lineage>
        <taxon>Bacteria</taxon>
        <taxon>Bacillati</taxon>
        <taxon>Chloroflexota</taxon>
        <taxon>Chloroflexia</taxon>
        <taxon>Chloroflexales</taxon>
        <taxon>Chloroflexineae</taxon>
        <taxon>Chloroflexaceae</taxon>
        <taxon>Chloroflexus</taxon>
    </lineage>
</organism>
<reference key="1">
    <citation type="journal article" date="2011" name="BMC Genomics">
        <title>Complete genome sequence of the filamentous anoxygenic phototrophic bacterium Chloroflexus aurantiacus.</title>
        <authorList>
            <person name="Tang K.H."/>
            <person name="Barry K."/>
            <person name="Chertkov O."/>
            <person name="Dalin E."/>
            <person name="Han C.S."/>
            <person name="Hauser L.J."/>
            <person name="Honchak B.M."/>
            <person name="Karbach L.E."/>
            <person name="Land M.L."/>
            <person name="Lapidus A."/>
            <person name="Larimer F.W."/>
            <person name="Mikhailova N."/>
            <person name="Pitluck S."/>
            <person name="Pierson B.K."/>
            <person name="Blankenship R.E."/>
        </authorList>
    </citation>
    <scope>NUCLEOTIDE SEQUENCE [LARGE SCALE GENOMIC DNA]</scope>
    <source>
        <strain>ATCC 29366 / DSM 635 / J-10-fl</strain>
    </source>
</reference>
<evidence type="ECO:0000255" key="1">
    <source>
        <dbReference type="HAMAP-Rule" id="MF_00300"/>
    </source>
</evidence>
<keyword id="KW-0028">Amino-acid biosynthesis</keyword>
<keyword id="KW-0057">Aromatic amino acid biosynthesis</keyword>
<keyword id="KW-0274">FAD</keyword>
<keyword id="KW-0285">Flavoprotein</keyword>
<keyword id="KW-0288">FMN</keyword>
<keyword id="KW-0456">Lyase</keyword>
<keyword id="KW-0521">NADP</keyword>
<keyword id="KW-1185">Reference proteome</keyword>
<proteinExistence type="inferred from homology"/>